<name>BIOB_YEAST</name>
<reference key="1">
    <citation type="journal article" date="1994" name="Arch. Biochem. Biophys.">
        <title>The gene for biotin synthase from Saccharomyces cerevisiae: cloning, sequencing, and complementation of Escherichia coli strains lacking biotin synthase.</title>
        <authorList>
            <person name="Zhang S."/>
            <person name="Sanyal I."/>
            <person name="Bulboaca G.H."/>
            <person name="Rich A."/>
            <person name="Flint D.H."/>
        </authorList>
    </citation>
    <scope>NUCLEOTIDE SEQUENCE [GENOMIC DNA]</scope>
    <source>
        <strain>20B-12</strain>
    </source>
</reference>
<reference key="2">
    <citation type="journal article" date="1997" name="Yeast">
        <title>Sequence analysis of a near-subtelomeric 35.4 kb DNA segment on the right arm of chromosome VII from Saccharomyces cerevisiae carrying the MAL1 locus reveals 15 complete open reading frames, including ZUO1, BGL2 and BIO2 genes and an ABC transporter gene.</title>
        <authorList>
            <person name="Volckaert G."/>
            <person name="Voet M."/>
            <person name="Robben J."/>
        </authorList>
    </citation>
    <scope>NUCLEOTIDE SEQUENCE [GENOMIC DNA]</scope>
    <source>
        <strain>ATCC 96604 / S288c / FY1679</strain>
    </source>
</reference>
<reference key="3">
    <citation type="journal article" date="1997" name="Nature">
        <title>The nucleotide sequence of Saccharomyces cerevisiae chromosome VII.</title>
        <authorList>
            <person name="Tettelin H."/>
            <person name="Agostoni-Carbone M.L."/>
            <person name="Albermann K."/>
            <person name="Albers M."/>
            <person name="Arroyo J."/>
            <person name="Backes U."/>
            <person name="Barreiros T."/>
            <person name="Bertani I."/>
            <person name="Bjourson A.J."/>
            <person name="Brueckner M."/>
            <person name="Bruschi C.V."/>
            <person name="Carignani G."/>
            <person name="Castagnoli L."/>
            <person name="Cerdan E."/>
            <person name="Clemente M.L."/>
            <person name="Coblenz A."/>
            <person name="Coglievina M."/>
            <person name="Coissac E."/>
            <person name="Defoor E."/>
            <person name="Del Bino S."/>
            <person name="Delius H."/>
            <person name="Delneri D."/>
            <person name="de Wergifosse P."/>
            <person name="Dujon B."/>
            <person name="Durand P."/>
            <person name="Entian K.-D."/>
            <person name="Eraso P."/>
            <person name="Escribano V."/>
            <person name="Fabiani L."/>
            <person name="Fartmann B."/>
            <person name="Feroli F."/>
            <person name="Feuermann M."/>
            <person name="Frontali L."/>
            <person name="Garcia-Gonzalez M."/>
            <person name="Garcia-Saez M.I."/>
            <person name="Goffeau A."/>
            <person name="Guerreiro P."/>
            <person name="Hani J."/>
            <person name="Hansen M."/>
            <person name="Hebling U."/>
            <person name="Hernandez K."/>
            <person name="Heumann K."/>
            <person name="Hilger F."/>
            <person name="Hofmann B."/>
            <person name="Indge K.J."/>
            <person name="James C.M."/>
            <person name="Klima R."/>
            <person name="Koetter P."/>
            <person name="Kramer B."/>
            <person name="Kramer W."/>
            <person name="Lauquin G."/>
            <person name="Leuther H."/>
            <person name="Louis E.J."/>
            <person name="Maillier E."/>
            <person name="Marconi A."/>
            <person name="Martegani E."/>
            <person name="Mazon M.J."/>
            <person name="Mazzoni C."/>
            <person name="McReynolds A.D.K."/>
            <person name="Melchioretto P."/>
            <person name="Mewes H.-W."/>
            <person name="Minenkova O."/>
            <person name="Mueller-Auer S."/>
            <person name="Nawrocki A."/>
            <person name="Netter P."/>
            <person name="Neu R."/>
            <person name="Nombela C."/>
            <person name="Oliver S.G."/>
            <person name="Panzeri L."/>
            <person name="Paoluzi S."/>
            <person name="Plevani P."/>
            <person name="Portetelle D."/>
            <person name="Portillo F."/>
            <person name="Potier S."/>
            <person name="Purnelle B."/>
            <person name="Rieger M."/>
            <person name="Riles L."/>
            <person name="Rinaldi T."/>
            <person name="Robben J."/>
            <person name="Rodrigues-Pousada C."/>
            <person name="Rodriguez-Belmonte E."/>
            <person name="Rodriguez-Torres A.M."/>
            <person name="Rose M."/>
            <person name="Ruzzi M."/>
            <person name="Saliola M."/>
            <person name="Sanchez-Perez M."/>
            <person name="Schaefer B."/>
            <person name="Schaefer M."/>
            <person name="Scharfe M."/>
            <person name="Schmidheini T."/>
            <person name="Schreer A."/>
            <person name="Skala J."/>
            <person name="Souciet J.-L."/>
            <person name="Steensma H.Y."/>
            <person name="Talla E."/>
            <person name="Thierry A."/>
            <person name="Vandenbol M."/>
            <person name="van der Aart Q.J.M."/>
            <person name="Van Dyck L."/>
            <person name="Vanoni M."/>
            <person name="Verhasselt P."/>
            <person name="Voet M."/>
            <person name="Volckaert G."/>
            <person name="Wambutt R."/>
            <person name="Watson M.D."/>
            <person name="Weber N."/>
            <person name="Wedler E."/>
            <person name="Wedler H."/>
            <person name="Wipfli P."/>
            <person name="Wolf K."/>
            <person name="Wright L.F."/>
            <person name="Zaccaria P."/>
            <person name="Zimmermann M."/>
            <person name="Zollner A."/>
            <person name="Kleine K."/>
        </authorList>
    </citation>
    <scope>NUCLEOTIDE SEQUENCE [LARGE SCALE GENOMIC DNA]</scope>
    <source>
        <strain>ATCC 204508 / S288c</strain>
    </source>
</reference>
<reference key="4">
    <citation type="journal article" date="2014" name="G3 (Bethesda)">
        <title>The reference genome sequence of Saccharomyces cerevisiae: Then and now.</title>
        <authorList>
            <person name="Engel S.R."/>
            <person name="Dietrich F.S."/>
            <person name="Fisk D.G."/>
            <person name="Binkley G."/>
            <person name="Balakrishnan R."/>
            <person name="Costanzo M.C."/>
            <person name="Dwight S.S."/>
            <person name="Hitz B.C."/>
            <person name="Karra K."/>
            <person name="Nash R.S."/>
            <person name="Weng S."/>
            <person name="Wong E.D."/>
            <person name="Lloyd P."/>
            <person name="Skrzypek M.S."/>
            <person name="Miyasato S.R."/>
            <person name="Simison M."/>
            <person name="Cherry J.M."/>
        </authorList>
    </citation>
    <scope>GENOME REANNOTATION</scope>
    <source>
        <strain>ATCC 204508 / S288c</strain>
    </source>
</reference>
<reference key="5">
    <citation type="journal article" date="2003" name="Nature">
        <title>Global analysis of protein localization in budding yeast.</title>
        <authorList>
            <person name="Huh W.-K."/>
            <person name="Falvo J.V."/>
            <person name="Gerke L.C."/>
            <person name="Carroll A.S."/>
            <person name="Howson R.W."/>
            <person name="Weissman J.S."/>
            <person name="O'Shea E.K."/>
        </authorList>
    </citation>
    <scope>SUBCELLULAR LOCATION [LARGE SCALE ANALYSIS]</scope>
</reference>
<reference key="6">
    <citation type="journal article" date="2003" name="Nature">
        <title>Global analysis of protein expression in yeast.</title>
        <authorList>
            <person name="Ghaemmaghami S."/>
            <person name="Huh W.-K."/>
            <person name="Bower K."/>
            <person name="Howson R.W."/>
            <person name="Belle A."/>
            <person name="Dephoure N."/>
            <person name="O'Shea E.K."/>
            <person name="Weissman J.S."/>
        </authorList>
    </citation>
    <scope>LEVEL OF PROTEIN EXPRESSION [LARGE SCALE ANALYSIS]</scope>
</reference>
<feature type="transit peptide" description="Mitochondrion" evidence="2">
    <location>
        <begin position="1"/>
        <end position="16"/>
    </location>
</feature>
<feature type="chain" id="PRO_0000185567" description="Biotin synthase, mitochondrial">
    <location>
        <begin position="17"/>
        <end position="375"/>
    </location>
</feature>
<feature type="domain" description="Radical SAM core" evidence="3">
    <location>
        <begin position="81"/>
        <end position="310"/>
    </location>
</feature>
<feature type="binding site" evidence="1">
    <location>
        <position position="99"/>
    </location>
    <ligand>
        <name>[4Fe-4S] cluster</name>
        <dbReference type="ChEBI" id="CHEBI:49883"/>
        <note>4Fe-4S-S-AdoMet</note>
    </ligand>
</feature>
<feature type="binding site" evidence="1">
    <location>
        <position position="103"/>
    </location>
    <ligand>
        <name>[4Fe-4S] cluster</name>
        <dbReference type="ChEBI" id="CHEBI:49883"/>
        <note>4Fe-4S-S-AdoMet</note>
    </ligand>
</feature>
<feature type="binding site" evidence="1">
    <location>
        <position position="106"/>
    </location>
    <ligand>
        <name>[4Fe-4S] cluster</name>
        <dbReference type="ChEBI" id="CHEBI:49883"/>
        <note>4Fe-4S-S-AdoMet</note>
    </ligand>
</feature>
<feature type="binding site" evidence="1">
    <location>
        <position position="143"/>
    </location>
    <ligand>
        <name>[2Fe-2S] cluster</name>
        <dbReference type="ChEBI" id="CHEBI:190135"/>
    </ligand>
</feature>
<feature type="binding site" evidence="1">
    <location>
        <position position="176"/>
    </location>
    <ligand>
        <name>[2Fe-2S] cluster</name>
        <dbReference type="ChEBI" id="CHEBI:190135"/>
    </ligand>
</feature>
<feature type="binding site" evidence="1">
    <location>
        <position position="236"/>
    </location>
    <ligand>
        <name>[2Fe-2S] cluster</name>
        <dbReference type="ChEBI" id="CHEBI:190135"/>
    </ligand>
</feature>
<feature type="binding site" evidence="1">
    <location>
        <position position="314"/>
    </location>
    <ligand>
        <name>[2Fe-2S] cluster</name>
        <dbReference type="ChEBI" id="CHEBI:190135"/>
    </ligand>
</feature>
<feature type="sequence conflict" description="In Ref. 1; CAA51253." evidence="6" ref="1">
    <original>MC</original>
    <variation>IY</variation>
    <location>
        <begin position="348"/>
        <end position="349"/>
    </location>
</feature>
<gene>
    <name type="primary">BIO2</name>
    <name type="ordered locus">YGR286C</name>
</gene>
<keyword id="KW-0001">2Fe-2S</keyword>
<keyword id="KW-0004">4Fe-4S</keyword>
<keyword id="KW-0093">Biotin biosynthesis</keyword>
<keyword id="KW-0408">Iron</keyword>
<keyword id="KW-0411">Iron-sulfur</keyword>
<keyword id="KW-0479">Metal-binding</keyword>
<keyword id="KW-0496">Mitochondrion</keyword>
<keyword id="KW-1185">Reference proteome</keyword>
<keyword id="KW-0949">S-adenosyl-L-methionine</keyword>
<keyword id="KW-0808">Transferase</keyword>
<keyword id="KW-0809">Transit peptide</keyword>
<evidence type="ECO:0000250" key="1"/>
<evidence type="ECO:0000255" key="2"/>
<evidence type="ECO:0000255" key="3">
    <source>
        <dbReference type="PROSITE-ProRule" id="PRU01266"/>
    </source>
</evidence>
<evidence type="ECO:0000269" key="4">
    <source>
    </source>
</evidence>
<evidence type="ECO:0000269" key="5">
    <source>
    </source>
</evidence>
<evidence type="ECO:0000305" key="6"/>
<protein>
    <recommendedName>
        <fullName>Biotin synthase, mitochondrial</fullName>
        <ecNumber>2.8.1.6</ecNumber>
    </recommendedName>
</protein>
<accession>P32451</accession>
<accession>D6VV63</accession>
<comment type="catalytic activity">
    <reaction>
        <text>(4R,5S)-dethiobiotin + (sulfur carrier)-SH + 2 reduced [2Fe-2S]-[ferredoxin] + 2 S-adenosyl-L-methionine = (sulfur carrier)-H + biotin + 2 5'-deoxyadenosine + 2 L-methionine + 2 oxidized [2Fe-2S]-[ferredoxin]</text>
        <dbReference type="Rhea" id="RHEA:22060"/>
        <dbReference type="Rhea" id="RHEA-COMP:10000"/>
        <dbReference type="Rhea" id="RHEA-COMP:10001"/>
        <dbReference type="Rhea" id="RHEA-COMP:14737"/>
        <dbReference type="Rhea" id="RHEA-COMP:14739"/>
        <dbReference type="ChEBI" id="CHEBI:17319"/>
        <dbReference type="ChEBI" id="CHEBI:29917"/>
        <dbReference type="ChEBI" id="CHEBI:33737"/>
        <dbReference type="ChEBI" id="CHEBI:33738"/>
        <dbReference type="ChEBI" id="CHEBI:57586"/>
        <dbReference type="ChEBI" id="CHEBI:57844"/>
        <dbReference type="ChEBI" id="CHEBI:59789"/>
        <dbReference type="ChEBI" id="CHEBI:64428"/>
        <dbReference type="ChEBI" id="CHEBI:149473"/>
        <dbReference type="EC" id="2.8.1.6"/>
    </reaction>
</comment>
<comment type="cofactor">
    <cofactor evidence="1">
        <name>[4Fe-4S] cluster</name>
        <dbReference type="ChEBI" id="CHEBI:49883"/>
    </cofactor>
    <text evidence="1">Binds 1 [4Fe-4S] cluster. The cluster is coordinated with 3 cysteines and an exchangeable S-adenosyl-L-methionine.</text>
</comment>
<comment type="cofactor">
    <cofactor evidence="1">
        <name>[2Fe-2S] cluster</name>
        <dbReference type="ChEBI" id="CHEBI:190135"/>
    </cofactor>
    <text evidence="1">Binds 1 [2Fe-2S] cluster. The cluster is coordinated with 3 cysteines and 1 arginine.</text>
</comment>
<comment type="pathway">
    <text>Cofactor biosynthesis; biotin biosynthesis; biotin from 7,8-diaminononanoate: step 2/2.</text>
</comment>
<comment type="subcellular location">
    <subcellularLocation>
        <location evidence="4">Mitochondrion</location>
    </subcellularLocation>
</comment>
<comment type="miscellaneous">
    <text evidence="5">Present with 504 molecules/cell in log phase SD medium.</text>
</comment>
<comment type="similarity">
    <text evidence="6">Belongs to the radical SAM superfamily. Biotin synthase family.</text>
</comment>
<comment type="sequence caution" evidence="6">
    <conflict type="erroneous termination">
        <sequence resource="EMBL-CDS" id="CAA51253"/>
    </conflict>
    <text>Truncated C-terminus.</text>
</comment>
<comment type="sequence caution" evidence="6">
    <conflict type="frameshift">
        <sequence resource="EMBL-CDS" id="CAA51253"/>
    </conflict>
</comment>
<organism>
    <name type="scientific">Saccharomyces cerevisiae (strain ATCC 204508 / S288c)</name>
    <name type="common">Baker's yeast</name>
    <dbReference type="NCBI Taxonomy" id="559292"/>
    <lineage>
        <taxon>Eukaryota</taxon>
        <taxon>Fungi</taxon>
        <taxon>Dikarya</taxon>
        <taxon>Ascomycota</taxon>
        <taxon>Saccharomycotina</taxon>
        <taxon>Saccharomycetes</taxon>
        <taxon>Saccharomycetales</taxon>
        <taxon>Saccharomycetaceae</taxon>
        <taxon>Saccharomyces</taxon>
    </lineage>
</organism>
<dbReference type="EC" id="2.8.1.6"/>
<dbReference type="EMBL" id="X72701">
    <property type="protein sequence ID" value="CAA51253.1"/>
    <property type="status" value="ALT_SEQ"/>
    <property type="molecule type" value="Genomic_DNA"/>
</dbReference>
<dbReference type="EMBL" id="Z73071">
    <property type="protein sequence ID" value="CAA97318.1"/>
    <property type="molecule type" value="Genomic_DNA"/>
</dbReference>
<dbReference type="EMBL" id="BK006941">
    <property type="protein sequence ID" value="DAA08374.1"/>
    <property type="molecule type" value="Genomic_DNA"/>
</dbReference>
<dbReference type="PIR" id="S64621">
    <property type="entry name" value="S64621"/>
</dbReference>
<dbReference type="RefSeq" id="NP_011802.1">
    <property type="nucleotide sequence ID" value="NM_001181415.1"/>
</dbReference>
<dbReference type="SMR" id="P32451"/>
<dbReference type="BioGRID" id="33536">
    <property type="interactions" value="101"/>
</dbReference>
<dbReference type="FunCoup" id="P32451">
    <property type="interactions" value="313"/>
</dbReference>
<dbReference type="IntAct" id="P32451">
    <property type="interactions" value="2"/>
</dbReference>
<dbReference type="MINT" id="P32451"/>
<dbReference type="STRING" id="4932.YGR286C"/>
<dbReference type="iPTMnet" id="P32451"/>
<dbReference type="PaxDb" id="4932-YGR286C"/>
<dbReference type="PeptideAtlas" id="P32451"/>
<dbReference type="EnsemblFungi" id="YGR286C_mRNA">
    <property type="protein sequence ID" value="YGR286C"/>
    <property type="gene ID" value="YGR286C"/>
</dbReference>
<dbReference type="GeneID" id="853203"/>
<dbReference type="KEGG" id="sce:YGR286C"/>
<dbReference type="AGR" id="SGD:S000003518"/>
<dbReference type="SGD" id="S000003518">
    <property type="gene designation" value="BIO2"/>
</dbReference>
<dbReference type="VEuPathDB" id="FungiDB:YGR286C"/>
<dbReference type="eggNOG" id="KOG2900">
    <property type="taxonomic scope" value="Eukaryota"/>
</dbReference>
<dbReference type="HOGENOM" id="CLU_033172_1_2_1"/>
<dbReference type="InParanoid" id="P32451"/>
<dbReference type="OMA" id="NICTTHT"/>
<dbReference type="OrthoDB" id="2414104at2759"/>
<dbReference type="BioCyc" id="YEAST:YGR286C-MONOMER"/>
<dbReference type="UniPathway" id="UPA00078">
    <property type="reaction ID" value="UER00162"/>
</dbReference>
<dbReference type="BioGRID-ORCS" id="853203">
    <property type="hits" value="2 hits in 10 CRISPR screens"/>
</dbReference>
<dbReference type="PRO" id="PR:P32451"/>
<dbReference type="Proteomes" id="UP000002311">
    <property type="component" value="Chromosome VII"/>
</dbReference>
<dbReference type="RNAct" id="P32451">
    <property type="molecule type" value="protein"/>
</dbReference>
<dbReference type="GO" id="GO:0005739">
    <property type="term" value="C:mitochondrion"/>
    <property type="evidence" value="ECO:0007005"/>
    <property type="project" value="SGD"/>
</dbReference>
<dbReference type="GO" id="GO:0051537">
    <property type="term" value="F:2 iron, 2 sulfur cluster binding"/>
    <property type="evidence" value="ECO:0000318"/>
    <property type="project" value="GO_Central"/>
</dbReference>
<dbReference type="GO" id="GO:0051539">
    <property type="term" value="F:4 iron, 4 sulfur cluster binding"/>
    <property type="evidence" value="ECO:0007669"/>
    <property type="project" value="UniProtKB-KW"/>
</dbReference>
<dbReference type="GO" id="GO:0004076">
    <property type="term" value="F:biotin synthase activity"/>
    <property type="evidence" value="ECO:0000315"/>
    <property type="project" value="SGD"/>
</dbReference>
<dbReference type="GO" id="GO:0046872">
    <property type="term" value="F:metal ion binding"/>
    <property type="evidence" value="ECO:0007669"/>
    <property type="project" value="UniProtKB-KW"/>
</dbReference>
<dbReference type="GO" id="GO:0009102">
    <property type="term" value="P:biotin biosynthetic process"/>
    <property type="evidence" value="ECO:0000315"/>
    <property type="project" value="SGD"/>
</dbReference>
<dbReference type="CDD" id="cd01335">
    <property type="entry name" value="Radical_SAM"/>
    <property type="match status" value="1"/>
</dbReference>
<dbReference type="FunFam" id="3.20.20.70:FF:000011">
    <property type="entry name" value="Biotin synthase"/>
    <property type="match status" value="1"/>
</dbReference>
<dbReference type="Gene3D" id="3.20.20.70">
    <property type="entry name" value="Aldolase class I"/>
    <property type="match status" value="1"/>
</dbReference>
<dbReference type="HAMAP" id="MF_01694">
    <property type="entry name" value="BioB"/>
    <property type="match status" value="1"/>
</dbReference>
<dbReference type="InterPro" id="IPR013785">
    <property type="entry name" value="Aldolase_TIM"/>
</dbReference>
<dbReference type="InterPro" id="IPR010722">
    <property type="entry name" value="BATS_dom"/>
</dbReference>
<dbReference type="InterPro" id="IPR002684">
    <property type="entry name" value="Biotin_synth/BioAB"/>
</dbReference>
<dbReference type="InterPro" id="IPR024177">
    <property type="entry name" value="Biotin_synthase"/>
</dbReference>
<dbReference type="InterPro" id="IPR006638">
    <property type="entry name" value="Elp3/MiaA/NifB-like_rSAM"/>
</dbReference>
<dbReference type="InterPro" id="IPR007197">
    <property type="entry name" value="rSAM"/>
</dbReference>
<dbReference type="NCBIfam" id="TIGR00433">
    <property type="entry name" value="bioB"/>
    <property type="match status" value="1"/>
</dbReference>
<dbReference type="PANTHER" id="PTHR22976">
    <property type="entry name" value="BIOTIN SYNTHASE"/>
    <property type="match status" value="1"/>
</dbReference>
<dbReference type="PANTHER" id="PTHR22976:SF2">
    <property type="entry name" value="BIOTIN SYNTHASE, MITOCHONDRIAL"/>
    <property type="match status" value="1"/>
</dbReference>
<dbReference type="Pfam" id="PF06968">
    <property type="entry name" value="BATS"/>
    <property type="match status" value="1"/>
</dbReference>
<dbReference type="Pfam" id="PF04055">
    <property type="entry name" value="Radical_SAM"/>
    <property type="match status" value="1"/>
</dbReference>
<dbReference type="PIRSF" id="PIRSF001619">
    <property type="entry name" value="Biotin_synth"/>
    <property type="match status" value="1"/>
</dbReference>
<dbReference type="SFLD" id="SFLDF00272">
    <property type="entry name" value="biotin_synthase"/>
    <property type="match status" value="1"/>
</dbReference>
<dbReference type="SFLD" id="SFLDG01278">
    <property type="entry name" value="biotin_synthase_like"/>
    <property type="match status" value="1"/>
</dbReference>
<dbReference type="SMART" id="SM00876">
    <property type="entry name" value="BATS"/>
    <property type="match status" value="1"/>
</dbReference>
<dbReference type="SMART" id="SM00729">
    <property type="entry name" value="Elp3"/>
    <property type="match status" value="1"/>
</dbReference>
<dbReference type="SUPFAM" id="SSF102114">
    <property type="entry name" value="Radical SAM enzymes"/>
    <property type="match status" value="1"/>
</dbReference>
<dbReference type="PROSITE" id="PS51918">
    <property type="entry name" value="RADICAL_SAM"/>
    <property type="match status" value="1"/>
</dbReference>
<sequence>MMSTIYRHLSTARPALTKYATNAAVKSTTASSEASTLGALQYALSLDEPSHSWTKSQLKEIYHTPLLELTHAAQLQHRKWHDPTKVQLCTLMNIKSGGCSEDCKYCAQSSRNDTGLKAEKMVKVDEVIKEAEEAKRNGSTRFCLGAAWRDMKGRKSAMKRIQEMVTKVNDMGLETCVTLGMVDQDQAKQLKDAGLTAYNHNIDTSREHYSKVITTRTYDDRLQTIKNVQESGIKACTGGILGLGESEDDHIGFIYTLSNMSPHPESLPINRLVAIKGTPMAEELADPKSKKLQFDEILRTIATARIVMPKAIIRLAAGRYTMKETEQFVCFMAGCNSIFTGKKMLTTMCNGWDEDKAMLAKWGLQPMEAFKYDRS</sequence>
<proteinExistence type="evidence at protein level"/>